<name>EPD_DANRE</name>
<feature type="signal peptide">
    <location>
        <begin position="1"/>
        <end position="20"/>
    </location>
</feature>
<feature type="chain" id="PRO_0000008340" description="Ependymin">
    <location>
        <begin position="21"/>
        <end position="217"/>
    </location>
</feature>
<feature type="glycosylation site" description="N-linked (GlcNAc...) asparagine" evidence="1">
    <location>
        <position position="73"/>
    </location>
</feature>
<feature type="glycosylation site" description="N-linked (GlcNAc...) asparagine" evidence="1">
    <location>
        <position position="96"/>
    </location>
</feature>
<feature type="sequence conflict" description="In Ref. 1; CAA36742." evidence="2" ref="1">
    <original>M</original>
    <variation>I</variation>
    <location>
        <position position="78"/>
    </location>
</feature>
<sequence length="217" mass="24472">MHTVKLLCVVFSCLCAIGWASHHSHRQPCHSPQLTSGTMKVVSTGGHDLASGEFSYDSKTNKFRFVEDTTHANKTSYMDVLIHFEEGVLYEIDSKNESCKKETLQFRKHLMEIPVDATHESESYMGSPSLTEQGLRVRVWNGKFPELHAHYSLSTTSCGCLTVSGSYYGEKKDLFFSFFGVETEVDDLQVFAPPAYCEGVSFEEAPDDHSFFDLFHD</sequence>
<comment type="function">
    <text>May play a role in neural plasticity. May be involved during axon regeneration.</text>
</comment>
<comment type="subunit">
    <text>Forms disulfide-linked dimers.</text>
</comment>
<comment type="subcellular location">
    <subcellularLocation>
        <location>Secreted</location>
    </subcellularLocation>
</comment>
<comment type="tissue specificity">
    <text>EPDs are synthesized in the meninx and secreted in the cerebrospinal fluid.</text>
</comment>
<comment type="PTM">
    <text>Binds calcium through the terminal sialic acids.</text>
</comment>
<comment type="similarity">
    <text evidence="2">Belongs to the ependymin family.</text>
</comment>
<reference key="1">
    <citation type="journal article" date="1990" name="Neuroscience">
        <title>Biosynthesis and expression of ependymin homologous sequences in zebrafish brain.</title>
        <authorList>
            <person name="Sterrer S."/>
            <person name="Koenigstorfer A."/>
            <person name="Hoffmann W."/>
        </authorList>
    </citation>
    <scope>NUCLEOTIDE SEQUENCE [MRNA]</scope>
    <source>
        <tissue>Brain</tissue>
    </source>
</reference>
<reference key="2">
    <citation type="journal article" date="1992" name="DNA Cell Biol.">
        <title>Molecular analysis of the ependymin gene and functional test of its promoter region by transient expression in Brachydanio rerio.</title>
        <authorList>
            <person name="Rinder H."/>
            <person name="Bayer T.A."/>
            <person name="Gertzen E."/>
            <person name="Hoffmann W."/>
        </authorList>
    </citation>
    <scope>NUCLEOTIDE SEQUENCE [GENOMIC DNA]</scope>
</reference>
<reference key="3">
    <citation type="submission" date="2005-04" db="EMBL/GenBank/DDBJ databases">
        <authorList>
            <consortium name="NIH - Zebrafish Gene Collection (ZGC) project"/>
        </authorList>
    </citation>
    <scope>NUCLEOTIDE SEQUENCE [LARGE SCALE MRNA]</scope>
    <source>
        <tissue>Brain</tissue>
    </source>
</reference>
<dbReference type="EMBL" id="X52502">
    <property type="protein sequence ID" value="CAA36742.1"/>
    <property type="molecule type" value="mRNA"/>
</dbReference>
<dbReference type="EMBL" id="M89643">
    <property type="protein sequence ID" value="AAA50026.1"/>
    <property type="molecule type" value="Genomic_DNA"/>
</dbReference>
<dbReference type="EMBL" id="BC092712">
    <property type="protein sequence ID" value="AAH92712.1"/>
    <property type="molecule type" value="mRNA"/>
</dbReference>
<dbReference type="PIR" id="A43820">
    <property type="entry name" value="A43820"/>
</dbReference>
<dbReference type="RefSeq" id="NP_571080.1">
    <property type="nucleotide sequence ID" value="NM_131005.2"/>
</dbReference>
<dbReference type="SMR" id="P17561"/>
<dbReference type="FunCoup" id="P17561">
    <property type="interactions" value="2"/>
</dbReference>
<dbReference type="STRING" id="7955.ENSDARP00000134034"/>
<dbReference type="GlyCosmos" id="P17561">
    <property type="glycosylation" value="2 sites, No reported glycans"/>
</dbReference>
<dbReference type="PaxDb" id="7955-ENSDARP00000049894"/>
<dbReference type="Ensembl" id="ENSDART00000171617">
    <property type="protein sequence ID" value="ENSDARP00000134034"/>
    <property type="gene ID" value="ENSDARG00000103498"/>
</dbReference>
<dbReference type="GeneID" id="30199"/>
<dbReference type="KEGG" id="dre:30199"/>
<dbReference type="AGR" id="ZFIN:ZDB-GENE-980526-111"/>
<dbReference type="CTD" id="30199"/>
<dbReference type="ZFIN" id="ZDB-GENE-980526-111">
    <property type="gene designation" value="epd"/>
</dbReference>
<dbReference type="eggNOG" id="ENOG502S4KH">
    <property type="taxonomic scope" value="Eukaryota"/>
</dbReference>
<dbReference type="HOGENOM" id="CLU_097673_1_0_1"/>
<dbReference type="InParanoid" id="P17561"/>
<dbReference type="OMA" id="MSVTMGC"/>
<dbReference type="OrthoDB" id="8872894at2759"/>
<dbReference type="PhylomeDB" id="P17561"/>
<dbReference type="PRO" id="PR:P17561"/>
<dbReference type="Proteomes" id="UP000000437">
    <property type="component" value="Alternate scaffold 5"/>
</dbReference>
<dbReference type="Proteomes" id="UP000000437">
    <property type="component" value="Chromosome 5"/>
</dbReference>
<dbReference type="Bgee" id="ENSDARG00000103498">
    <property type="expression patterns" value="Expressed in brain and 12 other cell types or tissues"/>
</dbReference>
<dbReference type="GO" id="GO:0005576">
    <property type="term" value="C:extracellular region"/>
    <property type="evidence" value="ECO:0007669"/>
    <property type="project" value="UniProtKB-SubCell"/>
</dbReference>
<dbReference type="GO" id="GO:0005764">
    <property type="term" value="C:lysosome"/>
    <property type="evidence" value="ECO:0000318"/>
    <property type="project" value="GO_Central"/>
</dbReference>
<dbReference type="GO" id="GO:0005509">
    <property type="term" value="F:calcium ion binding"/>
    <property type="evidence" value="ECO:0007669"/>
    <property type="project" value="InterPro"/>
</dbReference>
<dbReference type="GO" id="GO:0007160">
    <property type="term" value="P:cell-matrix adhesion"/>
    <property type="evidence" value="ECO:0007669"/>
    <property type="project" value="InterPro"/>
</dbReference>
<dbReference type="InterPro" id="IPR001299">
    <property type="entry name" value="Ependymin"/>
</dbReference>
<dbReference type="InterPro" id="IPR018224">
    <property type="entry name" value="Ependymin_CS"/>
</dbReference>
<dbReference type="PANTHER" id="PTHR10697:SF5">
    <property type="entry name" value="EPENDYMIN-RELATED"/>
    <property type="match status" value="1"/>
</dbReference>
<dbReference type="PANTHER" id="PTHR10697">
    <property type="entry name" value="MAMMALIAN EPENDYMIN-RELATED PROTEIN 1"/>
    <property type="match status" value="1"/>
</dbReference>
<dbReference type="Pfam" id="PF00811">
    <property type="entry name" value="Ependymin"/>
    <property type="match status" value="1"/>
</dbReference>
<dbReference type="PRINTS" id="PR00317">
    <property type="entry name" value="EPENDYMIN"/>
</dbReference>
<dbReference type="SMART" id="SM00026">
    <property type="entry name" value="EPEND"/>
    <property type="match status" value="1"/>
</dbReference>
<dbReference type="PROSITE" id="PS00898">
    <property type="entry name" value="EPENDYMIN_1"/>
    <property type="match status" value="1"/>
</dbReference>
<dbReference type="PROSITE" id="PS00899">
    <property type="entry name" value="EPENDYMIN_2"/>
    <property type="match status" value="1"/>
</dbReference>
<keyword id="KW-0106">Calcium</keyword>
<keyword id="KW-1015">Disulfide bond</keyword>
<keyword id="KW-0325">Glycoprotein</keyword>
<keyword id="KW-1185">Reference proteome</keyword>
<keyword id="KW-0964">Secreted</keyword>
<keyword id="KW-0732">Signal</keyword>
<proteinExistence type="evidence at transcript level"/>
<organism>
    <name type="scientific">Danio rerio</name>
    <name type="common">Zebrafish</name>
    <name type="synonym">Brachydanio rerio</name>
    <dbReference type="NCBI Taxonomy" id="7955"/>
    <lineage>
        <taxon>Eukaryota</taxon>
        <taxon>Metazoa</taxon>
        <taxon>Chordata</taxon>
        <taxon>Craniata</taxon>
        <taxon>Vertebrata</taxon>
        <taxon>Euteleostomi</taxon>
        <taxon>Actinopterygii</taxon>
        <taxon>Neopterygii</taxon>
        <taxon>Teleostei</taxon>
        <taxon>Ostariophysi</taxon>
        <taxon>Cypriniformes</taxon>
        <taxon>Danionidae</taxon>
        <taxon>Danioninae</taxon>
        <taxon>Danio</taxon>
    </lineage>
</organism>
<protein>
    <recommendedName>
        <fullName>Ependymin</fullName>
        <shortName>EPD</shortName>
    </recommendedName>
</protein>
<evidence type="ECO:0000255" key="1"/>
<evidence type="ECO:0000305" key="2"/>
<accession>P17561</accession>
<accession>Q561Y9</accession>
<gene>
    <name type="primary">epd</name>
</gene>